<comment type="function">
    <text evidence="1">Activates KDO (a required 8-carbon sugar) for incorporation into bacterial lipopolysaccharide in Gram-negative bacteria.</text>
</comment>
<comment type="catalytic activity">
    <reaction evidence="1">
        <text>3-deoxy-alpha-D-manno-oct-2-ulosonate + CTP = CMP-3-deoxy-beta-D-manno-octulosonate + diphosphate</text>
        <dbReference type="Rhea" id="RHEA:23448"/>
        <dbReference type="ChEBI" id="CHEBI:33019"/>
        <dbReference type="ChEBI" id="CHEBI:37563"/>
        <dbReference type="ChEBI" id="CHEBI:85986"/>
        <dbReference type="ChEBI" id="CHEBI:85987"/>
        <dbReference type="EC" id="2.7.7.38"/>
    </reaction>
</comment>
<comment type="pathway">
    <text evidence="1">Nucleotide-sugar biosynthesis; CMP-3-deoxy-D-manno-octulosonate biosynthesis; CMP-3-deoxy-D-manno-octulosonate from 3-deoxy-D-manno-octulosonate and CTP: step 1/1.</text>
</comment>
<comment type="pathway">
    <text evidence="1">Bacterial outer membrane biogenesis; lipopolysaccharide biosynthesis.</text>
</comment>
<comment type="subcellular location">
    <subcellularLocation>
        <location evidence="1">Cytoplasm</location>
    </subcellularLocation>
</comment>
<comment type="similarity">
    <text evidence="1">Belongs to the KdsB family.</text>
</comment>
<dbReference type="EC" id="2.7.7.38" evidence="1"/>
<dbReference type="EMBL" id="CP000570">
    <property type="protein sequence ID" value="ABN82596.1"/>
    <property type="molecule type" value="Genomic_DNA"/>
</dbReference>
<dbReference type="RefSeq" id="WP_004185994.1">
    <property type="nucleotide sequence ID" value="NC_009074.1"/>
</dbReference>
<dbReference type="SMR" id="A3N6K5"/>
<dbReference type="GeneID" id="92979969"/>
<dbReference type="KEGG" id="bpd:BURPS668_0925"/>
<dbReference type="HOGENOM" id="CLU_065038_1_0_4"/>
<dbReference type="UniPathway" id="UPA00030"/>
<dbReference type="UniPathway" id="UPA00358">
    <property type="reaction ID" value="UER00476"/>
</dbReference>
<dbReference type="GO" id="GO:0005829">
    <property type="term" value="C:cytosol"/>
    <property type="evidence" value="ECO:0007669"/>
    <property type="project" value="TreeGrafter"/>
</dbReference>
<dbReference type="GO" id="GO:0008690">
    <property type="term" value="F:3-deoxy-manno-octulosonate cytidylyltransferase activity"/>
    <property type="evidence" value="ECO:0007669"/>
    <property type="project" value="UniProtKB-UniRule"/>
</dbReference>
<dbReference type="GO" id="GO:0033468">
    <property type="term" value="P:CMP-keto-3-deoxy-D-manno-octulosonic acid biosynthetic process"/>
    <property type="evidence" value="ECO:0007669"/>
    <property type="project" value="UniProtKB-UniRule"/>
</dbReference>
<dbReference type="GO" id="GO:0009103">
    <property type="term" value="P:lipopolysaccharide biosynthetic process"/>
    <property type="evidence" value="ECO:0007669"/>
    <property type="project" value="UniProtKB-UniRule"/>
</dbReference>
<dbReference type="CDD" id="cd02517">
    <property type="entry name" value="CMP-KDO-Synthetase"/>
    <property type="match status" value="1"/>
</dbReference>
<dbReference type="FunFam" id="3.90.550.10:FF:000011">
    <property type="entry name" value="3-deoxy-manno-octulosonate cytidylyltransferase"/>
    <property type="match status" value="1"/>
</dbReference>
<dbReference type="Gene3D" id="3.90.550.10">
    <property type="entry name" value="Spore Coat Polysaccharide Biosynthesis Protein SpsA, Chain A"/>
    <property type="match status" value="1"/>
</dbReference>
<dbReference type="HAMAP" id="MF_00057">
    <property type="entry name" value="KdsB"/>
    <property type="match status" value="1"/>
</dbReference>
<dbReference type="InterPro" id="IPR003329">
    <property type="entry name" value="Cytidylyl_trans"/>
</dbReference>
<dbReference type="InterPro" id="IPR004528">
    <property type="entry name" value="KdsB"/>
</dbReference>
<dbReference type="InterPro" id="IPR029044">
    <property type="entry name" value="Nucleotide-diphossugar_trans"/>
</dbReference>
<dbReference type="NCBIfam" id="TIGR00466">
    <property type="entry name" value="kdsB"/>
    <property type="match status" value="1"/>
</dbReference>
<dbReference type="NCBIfam" id="NF003950">
    <property type="entry name" value="PRK05450.1-3"/>
    <property type="match status" value="1"/>
</dbReference>
<dbReference type="NCBIfam" id="NF003952">
    <property type="entry name" value="PRK05450.1-5"/>
    <property type="match status" value="1"/>
</dbReference>
<dbReference type="NCBIfam" id="NF009905">
    <property type="entry name" value="PRK13368.1"/>
    <property type="match status" value="1"/>
</dbReference>
<dbReference type="PANTHER" id="PTHR42866">
    <property type="entry name" value="3-DEOXY-MANNO-OCTULOSONATE CYTIDYLYLTRANSFERASE"/>
    <property type="match status" value="1"/>
</dbReference>
<dbReference type="PANTHER" id="PTHR42866:SF2">
    <property type="entry name" value="3-DEOXY-MANNO-OCTULOSONATE CYTIDYLYLTRANSFERASE, MITOCHONDRIAL"/>
    <property type="match status" value="1"/>
</dbReference>
<dbReference type="Pfam" id="PF02348">
    <property type="entry name" value="CTP_transf_3"/>
    <property type="match status" value="1"/>
</dbReference>
<dbReference type="SUPFAM" id="SSF53448">
    <property type="entry name" value="Nucleotide-diphospho-sugar transferases"/>
    <property type="match status" value="1"/>
</dbReference>
<proteinExistence type="inferred from homology"/>
<evidence type="ECO:0000255" key="1">
    <source>
        <dbReference type="HAMAP-Rule" id="MF_00057"/>
    </source>
</evidence>
<feature type="chain" id="PRO_0000370038" description="3-deoxy-manno-octulosonate cytidylyltransferase">
    <location>
        <begin position="1"/>
        <end position="263"/>
    </location>
</feature>
<sequence>MTSPLPFVAVVPARLASTRLPNKPLADLGGKPMVVRVAERAREAGAQQVLVASDAQRVLDAVREHGFDAVLTRADHPSGTDRLAEVAAKLGFDDDTIVVNVQGDEPLIDPQLVRDVASHLAAHPSCAIATAAHPIHEAHEVFNPNYVKVVLDAHGVALYFSRAPIPWSRDAYLPHWPNVAAMPAPTCPVYRHIGLYAYRARFLRTYPTLAQAPIEAAEQLEQLRAMWHGERIAVRVTEHAPEAGIDTPADLERVQALFRSRAK</sequence>
<keyword id="KW-0963">Cytoplasm</keyword>
<keyword id="KW-0448">Lipopolysaccharide biosynthesis</keyword>
<keyword id="KW-0548">Nucleotidyltransferase</keyword>
<keyword id="KW-0808">Transferase</keyword>
<name>KDSB_BURP6</name>
<reference key="1">
    <citation type="journal article" date="2010" name="Genome Biol. Evol.">
        <title>Continuing evolution of Burkholderia mallei through genome reduction and large-scale rearrangements.</title>
        <authorList>
            <person name="Losada L."/>
            <person name="Ronning C.M."/>
            <person name="DeShazer D."/>
            <person name="Woods D."/>
            <person name="Fedorova N."/>
            <person name="Kim H.S."/>
            <person name="Shabalina S.A."/>
            <person name="Pearson T.R."/>
            <person name="Brinkac L."/>
            <person name="Tan P."/>
            <person name="Nandi T."/>
            <person name="Crabtree J."/>
            <person name="Badger J."/>
            <person name="Beckstrom-Sternberg S."/>
            <person name="Saqib M."/>
            <person name="Schutzer S.E."/>
            <person name="Keim P."/>
            <person name="Nierman W.C."/>
        </authorList>
    </citation>
    <scope>NUCLEOTIDE SEQUENCE [LARGE SCALE GENOMIC DNA]</scope>
    <source>
        <strain>668</strain>
    </source>
</reference>
<protein>
    <recommendedName>
        <fullName evidence="1">3-deoxy-manno-octulosonate cytidylyltransferase</fullName>
        <ecNumber evidence="1">2.7.7.38</ecNumber>
    </recommendedName>
    <alternativeName>
        <fullName evidence="1">CMP-2-keto-3-deoxyoctulosonic acid synthase</fullName>
        <shortName evidence="1">CKS</shortName>
        <shortName evidence="1">CMP-KDO synthase</shortName>
    </alternativeName>
</protein>
<accession>A3N6K5</accession>
<gene>
    <name evidence="1" type="primary">kdsB</name>
    <name type="ordered locus">BURPS668_0925</name>
</gene>
<organism>
    <name type="scientific">Burkholderia pseudomallei (strain 668)</name>
    <dbReference type="NCBI Taxonomy" id="320373"/>
    <lineage>
        <taxon>Bacteria</taxon>
        <taxon>Pseudomonadati</taxon>
        <taxon>Pseudomonadota</taxon>
        <taxon>Betaproteobacteria</taxon>
        <taxon>Burkholderiales</taxon>
        <taxon>Burkholderiaceae</taxon>
        <taxon>Burkholderia</taxon>
        <taxon>pseudomallei group</taxon>
    </lineage>
</organism>